<organism>
    <name type="scientific">Shewanella loihica (strain ATCC BAA-1088 / PV-4)</name>
    <dbReference type="NCBI Taxonomy" id="323850"/>
    <lineage>
        <taxon>Bacteria</taxon>
        <taxon>Pseudomonadati</taxon>
        <taxon>Pseudomonadota</taxon>
        <taxon>Gammaproteobacteria</taxon>
        <taxon>Alteromonadales</taxon>
        <taxon>Shewanellaceae</taxon>
        <taxon>Shewanella</taxon>
    </lineage>
</organism>
<comment type="function">
    <text evidence="1">Binds 23S rRNA and is also seen to make contacts with the A and possibly P site tRNAs.</text>
</comment>
<comment type="subunit">
    <text evidence="1">Part of the 50S ribosomal subunit.</text>
</comment>
<comment type="similarity">
    <text evidence="1">Belongs to the universal ribosomal protein uL16 family.</text>
</comment>
<accession>A3Q989</accession>
<evidence type="ECO:0000255" key="1">
    <source>
        <dbReference type="HAMAP-Rule" id="MF_01342"/>
    </source>
</evidence>
<evidence type="ECO:0000305" key="2"/>
<feature type="chain" id="PRO_1000054703" description="Large ribosomal subunit protein uL16">
    <location>
        <begin position="1"/>
        <end position="136"/>
    </location>
</feature>
<gene>
    <name evidence="1" type="primary">rplP</name>
    <name type="ordered locus">Shew_0165</name>
</gene>
<keyword id="KW-1185">Reference proteome</keyword>
<keyword id="KW-0687">Ribonucleoprotein</keyword>
<keyword id="KW-0689">Ribosomal protein</keyword>
<keyword id="KW-0694">RNA-binding</keyword>
<keyword id="KW-0699">rRNA-binding</keyword>
<keyword id="KW-0820">tRNA-binding</keyword>
<sequence>MLQPKRMKFRKMFKGRNRGLANGTEVSFGEFGLKAVGRGRLTARQIESARRAMTRHIKRQGQIWIRVFPDKPITSKPLEVRMGKGKGNVEYWVCQIQPGKVLYEMNGVSEELAREAFTLAAAKLPIKTTFVTKTVM</sequence>
<name>RL16_SHELP</name>
<proteinExistence type="inferred from homology"/>
<protein>
    <recommendedName>
        <fullName evidence="1">Large ribosomal subunit protein uL16</fullName>
    </recommendedName>
    <alternativeName>
        <fullName evidence="2">50S ribosomal protein L16</fullName>
    </alternativeName>
</protein>
<reference key="1">
    <citation type="submission" date="2007-03" db="EMBL/GenBank/DDBJ databases">
        <title>Complete sequence of Shewanella loihica PV-4.</title>
        <authorList>
            <consortium name="US DOE Joint Genome Institute"/>
            <person name="Copeland A."/>
            <person name="Lucas S."/>
            <person name="Lapidus A."/>
            <person name="Barry K."/>
            <person name="Detter J.C."/>
            <person name="Glavina del Rio T."/>
            <person name="Hammon N."/>
            <person name="Israni S."/>
            <person name="Dalin E."/>
            <person name="Tice H."/>
            <person name="Pitluck S."/>
            <person name="Chain P."/>
            <person name="Malfatti S."/>
            <person name="Shin M."/>
            <person name="Vergez L."/>
            <person name="Schmutz J."/>
            <person name="Larimer F."/>
            <person name="Land M."/>
            <person name="Hauser L."/>
            <person name="Kyrpides N."/>
            <person name="Mikhailova N."/>
            <person name="Romine M.F."/>
            <person name="Serres G."/>
            <person name="Fredrickson J."/>
            <person name="Tiedje J."/>
            <person name="Richardson P."/>
        </authorList>
    </citation>
    <scope>NUCLEOTIDE SEQUENCE [LARGE SCALE GENOMIC DNA]</scope>
    <source>
        <strain>ATCC BAA-1088 / PV-4</strain>
    </source>
</reference>
<dbReference type="EMBL" id="CP000606">
    <property type="protein sequence ID" value="ABO22037.1"/>
    <property type="molecule type" value="Genomic_DNA"/>
</dbReference>
<dbReference type="RefSeq" id="WP_011863973.1">
    <property type="nucleotide sequence ID" value="NC_009092.1"/>
</dbReference>
<dbReference type="SMR" id="A3Q989"/>
<dbReference type="STRING" id="323850.Shew_0165"/>
<dbReference type="KEGG" id="slo:Shew_0165"/>
<dbReference type="eggNOG" id="COG0197">
    <property type="taxonomic scope" value="Bacteria"/>
</dbReference>
<dbReference type="HOGENOM" id="CLU_078858_2_1_6"/>
<dbReference type="OrthoDB" id="9802589at2"/>
<dbReference type="Proteomes" id="UP000001558">
    <property type="component" value="Chromosome"/>
</dbReference>
<dbReference type="GO" id="GO:0022625">
    <property type="term" value="C:cytosolic large ribosomal subunit"/>
    <property type="evidence" value="ECO:0007669"/>
    <property type="project" value="TreeGrafter"/>
</dbReference>
<dbReference type="GO" id="GO:0019843">
    <property type="term" value="F:rRNA binding"/>
    <property type="evidence" value="ECO:0007669"/>
    <property type="project" value="UniProtKB-UniRule"/>
</dbReference>
<dbReference type="GO" id="GO:0003735">
    <property type="term" value="F:structural constituent of ribosome"/>
    <property type="evidence" value="ECO:0007669"/>
    <property type="project" value="InterPro"/>
</dbReference>
<dbReference type="GO" id="GO:0000049">
    <property type="term" value="F:tRNA binding"/>
    <property type="evidence" value="ECO:0007669"/>
    <property type="project" value="UniProtKB-KW"/>
</dbReference>
<dbReference type="GO" id="GO:0006412">
    <property type="term" value="P:translation"/>
    <property type="evidence" value="ECO:0007669"/>
    <property type="project" value="UniProtKB-UniRule"/>
</dbReference>
<dbReference type="CDD" id="cd01433">
    <property type="entry name" value="Ribosomal_L16_L10e"/>
    <property type="match status" value="1"/>
</dbReference>
<dbReference type="FunFam" id="3.90.1170.10:FF:000001">
    <property type="entry name" value="50S ribosomal protein L16"/>
    <property type="match status" value="1"/>
</dbReference>
<dbReference type="Gene3D" id="3.90.1170.10">
    <property type="entry name" value="Ribosomal protein L10e/L16"/>
    <property type="match status" value="1"/>
</dbReference>
<dbReference type="HAMAP" id="MF_01342">
    <property type="entry name" value="Ribosomal_uL16"/>
    <property type="match status" value="1"/>
</dbReference>
<dbReference type="InterPro" id="IPR047873">
    <property type="entry name" value="Ribosomal_uL16"/>
</dbReference>
<dbReference type="InterPro" id="IPR000114">
    <property type="entry name" value="Ribosomal_uL16_bact-type"/>
</dbReference>
<dbReference type="InterPro" id="IPR020798">
    <property type="entry name" value="Ribosomal_uL16_CS"/>
</dbReference>
<dbReference type="InterPro" id="IPR016180">
    <property type="entry name" value="Ribosomal_uL16_dom"/>
</dbReference>
<dbReference type="InterPro" id="IPR036920">
    <property type="entry name" value="Ribosomal_uL16_sf"/>
</dbReference>
<dbReference type="NCBIfam" id="TIGR01164">
    <property type="entry name" value="rplP_bact"/>
    <property type="match status" value="1"/>
</dbReference>
<dbReference type="PANTHER" id="PTHR12220">
    <property type="entry name" value="50S/60S RIBOSOMAL PROTEIN L16"/>
    <property type="match status" value="1"/>
</dbReference>
<dbReference type="PANTHER" id="PTHR12220:SF13">
    <property type="entry name" value="LARGE RIBOSOMAL SUBUNIT PROTEIN UL16M"/>
    <property type="match status" value="1"/>
</dbReference>
<dbReference type="Pfam" id="PF00252">
    <property type="entry name" value="Ribosomal_L16"/>
    <property type="match status" value="1"/>
</dbReference>
<dbReference type="PRINTS" id="PR00060">
    <property type="entry name" value="RIBOSOMALL16"/>
</dbReference>
<dbReference type="SUPFAM" id="SSF54686">
    <property type="entry name" value="Ribosomal protein L16p/L10e"/>
    <property type="match status" value="1"/>
</dbReference>
<dbReference type="PROSITE" id="PS00586">
    <property type="entry name" value="RIBOSOMAL_L16_1"/>
    <property type="match status" value="1"/>
</dbReference>
<dbReference type="PROSITE" id="PS00701">
    <property type="entry name" value="RIBOSOMAL_L16_2"/>
    <property type="match status" value="1"/>
</dbReference>